<proteinExistence type="evidence at transcript level"/>
<accession>Q9CQS9</accession>
<accession>A2AKH8</accession>
<accession>A2AKI1</accession>
<accession>Q3V1R1</accession>
<accession>Q9CRI2</accession>
<accession>Q9D9D0</accession>
<keyword id="KW-0025">Alternative splicing</keyword>
<keyword id="KW-0131">Cell cycle</keyword>
<keyword id="KW-0132">Cell division</keyword>
<keyword id="KW-0175">Coiled coil</keyword>
<keyword id="KW-0963">Cytoplasm</keyword>
<keyword id="KW-0206">Cytoskeleton</keyword>
<keyword id="KW-0493">Microtubule</keyword>
<keyword id="KW-0498">Mitosis</keyword>
<keyword id="KW-1185">Reference proteome</keyword>
<comment type="function">
    <text evidence="1">Contributes to mitotic spindle assembly, maintenance of centrosome integrity and completion of cytokinesis as part of the HAUS augmin-like complex.</text>
</comment>
<comment type="subunit">
    <text evidence="2">Component of the HAUS augmin-like complex. The complex interacts with the gamma-tubulin ring complex and this interaction is required for spindle assembly (By similarity). Interacts with EML3 (phosphorylated at 'Thr-882') (By similarity).</text>
</comment>
<comment type="subcellular location">
    <subcellularLocation>
        <location evidence="2">Cytoplasm</location>
        <location evidence="2">Cytoskeleton</location>
        <location evidence="2">Microtubule organizing center</location>
        <location evidence="2">Centrosome</location>
    </subcellularLocation>
    <subcellularLocation>
        <location evidence="2">Cytoplasm</location>
        <location evidence="2">Cytoskeleton</location>
        <location evidence="2">Spindle</location>
    </subcellularLocation>
    <text evidence="2">Localizes to interphase centrosomes and to mitotic spindle microtubules.</text>
</comment>
<comment type="alternative products">
    <event type="alternative splicing"/>
    <isoform>
        <id>Q9CQS9-1</id>
        <name>1</name>
        <sequence type="displayed"/>
    </isoform>
    <isoform>
        <id>Q9CQS9-2</id>
        <name>2</name>
        <sequence type="described" ref="VSP_012224"/>
    </isoform>
</comment>
<comment type="similarity">
    <text evidence="5">Belongs to the HAUS2 family.</text>
</comment>
<protein>
    <recommendedName>
        <fullName>HAUS augmin-like complex subunit 2</fullName>
    </recommendedName>
    <alternativeName>
        <fullName>Centrosomal protein of 27 kDa</fullName>
        <shortName>Cep27</shortName>
    </alternativeName>
</protein>
<feature type="chain" id="PRO_0000089485" description="HAUS augmin-like complex subunit 2">
    <location>
        <begin position="1"/>
        <end position="234"/>
    </location>
</feature>
<feature type="coiled-coil region" evidence="3">
    <location>
        <begin position="85"/>
        <end position="105"/>
    </location>
</feature>
<feature type="coiled-coil region" evidence="3">
    <location>
        <begin position="162"/>
        <end position="182"/>
    </location>
</feature>
<feature type="splice variant" id="VSP_012224" description="In isoform 2." evidence="4">
    <location>
        <begin position="1"/>
        <end position="32"/>
    </location>
</feature>
<feature type="sequence conflict" description="In Ref. 1; BAB24860." evidence="5" ref="1">
    <original>V</original>
    <variation>S</variation>
    <location>
        <position position="127"/>
    </location>
</feature>
<name>HAUS2_MOUSE</name>
<dbReference type="EMBL" id="AK007106">
    <property type="protein sequence ID" value="BAB24860.1"/>
    <property type="molecule type" value="mRNA"/>
</dbReference>
<dbReference type="EMBL" id="AK010445">
    <property type="protein sequence ID" value="BAB26946.1"/>
    <property type="molecule type" value="mRNA"/>
</dbReference>
<dbReference type="EMBL" id="AK012086">
    <property type="protein sequence ID" value="BAB28020.1"/>
    <property type="molecule type" value="mRNA"/>
</dbReference>
<dbReference type="EMBL" id="AK012960">
    <property type="protein sequence ID" value="BAB28570.1"/>
    <property type="molecule type" value="mRNA"/>
</dbReference>
<dbReference type="EMBL" id="AK132300">
    <property type="protein sequence ID" value="BAE21089.1"/>
    <property type="molecule type" value="mRNA"/>
</dbReference>
<dbReference type="EMBL" id="AL772299">
    <property type="status" value="NOT_ANNOTATED_CDS"/>
    <property type="molecule type" value="Genomic_DNA"/>
</dbReference>
<dbReference type="EMBL" id="BC086677">
    <property type="protein sequence ID" value="AAH86677.1"/>
    <property type="molecule type" value="mRNA"/>
</dbReference>
<dbReference type="CCDS" id="CCDS16624.1">
    <molecule id="Q9CQS9-1"/>
</dbReference>
<dbReference type="CCDS" id="CCDS71120.1">
    <molecule id="Q9CQS9-2"/>
</dbReference>
<dbReference type="RefSeq" id="NP_001277736.1">
    <molecule id="Q9CQS9-2"/>
    <property type="nucleotide sequence ID" value="NM_001290807.1"/>
</dbReference>
<dbReference type="RefSeq" id="NP_079751.1">
    <molecule id="Q9CQS9-1"/>
    <property type="nucleotide sequence ID" value="NM_025475.3"/>
</dbReference>
<dbReference type="SMR" id="Q9CQS9"/>
<dbReference type="BioGRID" id="211364">
    <property type="interactions" value="6"/>
</dbReference>
<dbReference type="FunCoup" id="Q9CQS9">
    <property type="interactions" value="1117"/>
</dbReference>
<dbReference type="IntAct" id="Q9CQS9">
    <property type="interactions" value="7"/>
</dbReference>
<dbReference type="STRING" id="10090.ENSMUSP00000117299"/>
<dbReference type="iPTMnet" id="Q9CQS9"/>
<dbReference type="PhosphoSitePlus" id="Q9CQS9"/>
<dbReference type="PaxDb" id="10090-ENSMUSP00000117299"/>
<dbReference type="PeptideAtlas" id="Q9CQS9"/>
<dbReference type="ProteomicsDB" id="270938">
    <molecule id="Q9CQS9-1"/>
</dbReference>
<dbReference type="ProteomicsDB" id="270939">
    <molecule id="Q9CQS9-2"/>
</dbReference>
<dbReference type="Pumba" id="Q9CQS9"/>
<dbReference type="Antibodypedia" id="23697">
    <property type="antibodies" value="61 antibodies from 18 providers"/>
</dbReference>
<dbReference type="Ensembl" id="ENSMUST00000110706.2">
    <molecule id="Q9CQS9-2"/>
    <property type="protein sequence ID" value="ENSMUSP00000106334.2"/>
    <property type="gene ID" value="ENSMUSG00000027285.14"/>
</dbReference>
<dbReference type="Ensembl" id="ENSMUST00000124187.8">
    <molecule id="Q9CQS9-1"/>
    <property type="protein sequence ID" value="ENSMUSP00000117299.2"/>
    <property type="gene ID" value="ENSMUSG00000027285.14"/>
</dbReference>
<dbReference type="GeneID" id="66296"/>
<dbReference type="KEGG" id="mmu:66296"/>
<dbReference type="UCSC" id="uc008lwo.2">
    <molecule id="Q9CQS9-1"/>
    <property type="organism name" value="mouse"/>
</dbReference>
<dbReference type="AGR" id="MGI:1913546"/>
<dbReference type="CTD" id="55142"/>
<dbReference type="MGI" id="MGI:1913546">
    <property type="gene designation" value="Haus2"/>
</dbReference>
<dbReference type="VEuPathDB" id="HostDB:ENSMUSG00000027285"/>
<dbReference type="eggNOG" id="ENOG502RY4E">
    <property type="taxonomic scope" value="Eukaryota"/>
</dbReference>
<dbReference type="GeneTree" id="ENSGT00390000004927"/>
<dbReference type="HOGENOM" id="CLU_096512_0_0_1"/>
<dbReference type="InParanoid" id="Q9CQS9"/>
<dbReference type="OMA" id="AKMDMLV"/>
<dbReference type="OrthoDB" id="2436605at2759"/>
<dbReference type="PhylomeDB" id="Q9CQS9"/>
<dbReference type="TreeFam" id="TF333194"/>
<dbReference type="Reactome" id="R-MMU-2565942">
    <property type="pathway name" value="Regulation of PLK1 Activity at G2/M Transition"/>
</dbReference>
<dbReference type="Reactome" id="R-MMU-380259">
    <property type="pathway name" value="Loss of Nlp from mitotic centrosomes"/>
</dbReference>
<dbReference type="Reactome" id="R-MMU-380270">
    <property type="pathway name" value="Recruitment of mitotic centrosome proteins and complexes"/>
</dbReference>
<dbReference type="Reactome" id="R-MMU-380284">
    <property type="pathway name" value="Loss of proteins required for interphase microtubule organization from the centrosome"/>
</dbReference>
<dbReference type="Reactome" id="R-MMU-380320">
    <property type="pathway name" value="Recruitment of NuMA to mitotic centrosomes"/>
</dbReference>
<dbReference type="Reactome" id="R-MMU-5620912">
    <property type="pathway name" value="Anchoring of the basal body to the plasma membrane"/>
</dbReference>
<dbReference type="Reactome" id="R-MMU-8854518">
    <property type="pathway name" value="AURKA Activation by TPX2"/>
</dbReference>
<dbReference type="BioGRID-ORCS" id="66296">
    <property type="hits" value="23 hits in 77 CRISPR screens"/>
</dbReference>
<dbReference type="ChiTaRS" id="Haus2">
    <property type="organism name" value="mouse"/>
</dbReference>
<dbReference type="PRO" id="PR:Q9CQS9"/>
<dbReference type="Proteomes" id="UP000000589">
    <property type="component" value="Chromosome 2"/>
</dbReference>
<dbReference type="RNAct" id="Q9CQS9">
    <property type="molecule type" value="protein"/>
</dbReference>
<dbReference type="Bgee" id="ENSMUSG00000027285">
    <property type="expression patterns" value="Expressed in rostral migratory stream and 250 other cell types or tissues"/>
</dbReference>
<dbReference type="ExpressionAtlas" id="Q9CQS9">
    <property type="expression patterns" value="baseline and differential"/>
</dbReference>
<dbReference type="GO" id="GO:0005813">
    <property type="term" value="C:centrosome"/>
    <property type="evidence" value="ECO:0000250"/>
    <property type="project" value="UniProtKB"/>
</dbReference>
<dbReference type="GO" id="GO:0005737">
    <property type="term" value="C:cytoplasm"/>
    <property type="evidence" value="ECO:0007669"/>
    <property type="project" value="UniProtKB-KW"/>
</dbReference>
<dbReference type="GO" id="GO:0070652">
    <property type="term" value="C:HAUS complex"/>
    <property type="evidence" value="ECO:0000250"/>
    <property type="project" value="UniProtKB"/>
</dbReference>
<dbReference type="GO" id="GO:1990498">
    <property type="term" value="C:mitotic spindle microtubule"/>
    <property type="evidence" value="ECO:0000250"/>
    <property type="project" value="UniProtKB"/>
</dbReference>
<dbReference type="GO" id="GO:0005876">
    <property type="term" value="C:spindle microtubule"/>
    <property type="evidence" value="ECO:0000314"/>
    <property type="project" value="MGI"/>
</dbReference>
<dbReference type="GO" id="GO:0051301">
    <property type="term" value="P:cell division"/>
    <property type="evidence" value="ECO:0007669"/>
    <property type="project" value="UniProtKB-KW"/>
</dbReference>
<dbReference type="GO" id="GO:0007098">
    <property type="term" value="P:centrosome cycle"/>
    <property type="evidence" value="ECO:0000250"/>
    <property type="project" value="UniProtKB"/>
</dbReference>
<dbReference type="GO" id="GO:0051225">
    <property type="term" value="P:spindle assembly"/>
    <property type="evidence" value="ECO:0000250"/>
    <property type="project" value="UniProtKB"/>
</dbReference>
<dbReference type="InterPro" id="IPR028346">
    <property type="entry name" value="HAUS2"/>
</dbReference>
<dbReference type="InterPro" id="IPR026242">
    <property type="entry name" value="HAUS2_metazoa"/>
</dbReference>
<dbReference type="PANTHER" id="PTHR16039">
    <property type="entry name" value="HAUS AUGMIN-LIKE COMPLEX SUBUNIT 2"/>
    <property type="match status" value="1"/>
</dbReference>
<dbReference type="PANTHER" id="PTHR16039:SF1">
    <property type="entry name" value="HAUS AUGMIN-LIKE COMPLEX SUBUNIT 2"/>
    <property type="match status" value="1"/>
</dbReference>
<dbReference type="Pfam" id="PF15003">
    <property type="entry name" value="HAUS2"/>
    <property type="match status" value="1"/>
</dbReference>
<dbReference type="PRINTS" id="PR02088">
    <property type="entry name" value="HAUSAUGMINL2"/>
</dbReference>
<gene>
    <name type="primary">Haus2</name>
    <name type="synonym">Cep27</name>
</gene>
<reference key="1">
    <citation type="journal article" date="2005" name="Science">
        <title>The transcriptional landscape of the mammalian genome.</title>
        <authorList>
            <person name="Carninci P."/>
            <person name="Kasukawa T."/>
            <person name="Katayama S."/>
            <person name="Gough J."/>
            <person name="Frith M.C."/>
            <person name="Maeda N."/>
            <person name="Oyama R."/>
            <person name="Ravasi T."/>
            <person name="Lenhard B."/>
            <person name="Wells C."/>
            <person name="Kodzius R."/>
            <person name="Shimokawa K."/>
            <person name="Bajic V.B."/>
            <person name="Brenner S.E."/>
            <person name="Batalov S."/>
            <person name="Forrest A.R."/>
            <person name="Zavolan M."/>
            <person name="Davis M.J."/>
            <person name="Wilming L.G."/>
            <person name="Aidinis V."/>
            <person name="Allen J.E."/>
            <person name="Ambesi-Impiombato A."/>
            <person name="Apweiler R."/>
            <person name="Aturaliya R.N."/>
            <person name="Bailey T.L."/>
            <person name="Bansal M."/>
            <person name="Baxter L."/>
            <person name="Beisel K.W."/>
            <person name="Bersano T."/>
            <person name="Bono H."/>
            <person name="Chalk A.M."/>
            <person name="Chiu K.P."/>
            <person name="Choudhary V."/>
            <person name="Christoffels A."/>
            <person name="Clutterbuck D.R."/>
            <person name="Crowe M.L."/>
            <person name="Dalla E."/>
            <person name="Dalrymple B.P."/>
            <person name="de Bono B."/>
            <person name="Della Gatta G."/>
            <person name="di Bernardo D."/>
            <person name="Down T."/>
            <person name="Engstrom P."/>
            <person name="Fagiolini M."/>
            <person name="Faulkner G."/>
            <person name="Fletcher C.F."/>
            <person name="Fukushima T."/>
            <person name="Furuno M."/>
            <person name="Futaki S."/>
            <person name="Gariboldi M."/>
            <person name="Georgii-Hemming P."/>
            <person name="Gingeras T.R."/>
            <person name="Gojobori T."/>
            <person name="Green R.E."/>
            <person name="Gustincich S."/>
            <person name="Harbers M."/>
            <person name="Hayashi Y."/>
            <person name="Hensch T.K."/>
            <person name="Hirokawa N."/>
            <person name="Hill D."/>
            <person name="Huminiecki L."/>
            <person name="Iacono M."/>
            <person name="Ikeo K."/>
            <person name="Iwama A."/>
            <person name="Ishikawa T."/>
            <person name="Jakt M."/>
            <person name="Kanapin A."/>
            <person name="Katoh M."/>
            <person name="Kawasawa Y."/>
            <person name="Kelso J."/>
            <person name="Kitamura H."/>
            <person name="Kitano H."/>
            <person name="Kollias G."/>
            <person name="Krishnan S.P."/>
            <person name="Kruger A."/>
            <person name="Kummerfeld S.K."/>
            <person name="Kurochkin I.V."/>
            <person name="Lareau L.F."/>
            <person name="Lazarevic D."/>
            <person name="Lipovich L."/>
            <person name="Liu J."/>
            <person name="Liuni S."/>
            <person name="McWilliam S."/>
            <person name="Madan Babu M."/>
            <person name="Madera M."/>
            <person name="Marchionni L."/>
            <person name="Matsuda H."/>
            <person name="Matsuzawa S."/>
            <person name="Miki H."/>
            <person name="Mignone F."/>
            <person name="Miyake S."/>
            <person name="Morris K."/>
            <person name="Mottagui-Tabar S."/>
            <person name="Mulder N."/>
            <person name="Nakano N."/>
            <person name="Nakauchi H."/>
            <person name="Ng P."/>
            <person name="Nilsson R."/>
            <person name="Nishiguchi S."/>
            <person name="Nishikawa S."/>
            <person name="Nori F."/>
            <person name="Ohara O."/>
            <person name="Okazaki Y."/>
            <person name="Orlando V."/>
            <person name="Pang K.C."/>
            <person name="Pavan W.J."/>
            <person name="Pavesi G."/>
            <person name="Pesole G."/>
            <person name="Petrovsky N."/>
            <person name="Piazza S."/>
            <person name="Reed J."/>
            <person name="Reid J.F."/>
            <person name="Ring B.Z."/>
            <person name="Ringwald M."/>
            <person name="Rost B."/>
            <person name="Ruan Y."/>
            <person name="Salzberg S.L."/>
            <person name="Sandelin A."/>
            <person name="Schneider C."/>
            <person name="Schoenbach C."/>
            <person name="Sekiguchi K."/>
            <person name="Semple C.A."/>
            <person name="Seno S."/>
            <person name="Sessa L."/>
            <person name="Sheng Y."/>
            <person name="Shibata Y."/>
            <person name="Shimada H."/>
            <person name="Shimada K."/>
            <person name="Silva D."/>
            <person name="Sinclair B."/>
            <person name="Sperling S."/>
            <person name="Stupka E."/>
            <person name="Sugiura K."/>
            <person name="Sultana R."/>
            <person name="Takenaka Y."/>
            <person name="Taki K."/>
            <person name="Tammoja K."/>
            <person name="Tan S.L."/>
            <person name="Tang S."/>
            <person name="Taylor M.S."/>
            <person name="Tegner J."/>
            <person name="Teichmann S.A."/>
            <person name="Ueda H.R."/>
            <person name="van Nimwegen E."/>
            <person name="Verardo R."/>
            <person name="Wei C.L."/>
            <person name="Yagi K."/>
            <person name="Yamanishi H."/>
            <person name="Zabarovsky E."/>
            <person name="Zhu S."/>
            <person name="Zimmer A."/>
            <person name="Hide W."/>
            <person name="Bult C."/>
            <person name="Grimmond S.M."/>
            <person name="Teasdale R.D."/>
            <person name="Liu E.T."/>
            <person name="Brusic V."/>
            <person name="Quackenbush J."/>
            <person name="Wahlestedt C."/>
            <person name="Mattick J.S."/>
            <person name="Hume D.A."/>
            <person name="Kai C."/>
            <person name="Sasaki D."/>
            <person name="Tomaru Y."/>
            <person name="Fukuda S."/>
            <person name="Kanamori-Katayama M."/>
            <person name="Suzuki M."/>
            <person name="Aoki J."/>
            <person name="Arakawa T."/>
            <person name="Iida J."/>
            <person name="Imamura K."/>
            <person name="Itoh M."/>
            <person name="Kato T."/>
            <person name="Kawaji H."/>
            <person name="Kawagashira N."/>
            <person name="Kawashima T."/>
            <person name="Kojima M."/>
            <person name="Kondo S."/>
            <person name="Konno H."/>
            <person name="Nakano K."/>
            <person name="Ninomiya N."/>
            <person name="Nishio T."/>
            <person name="Okada M."/>
            <person name="Plessy C."/>
            <person name="Shibata K."/>
            <person name="Shiraki T."/>
            <person name="Suzuki S."/>
            <person name="Tagami M."/>
            <person name="Waki K."/>
            <person name="Watahiki A."/>
            <person name="Okamura-Oho Y."/>
            <person name="Suzuki H."/>
            <person name="Kawai J."/>
            <person name="Hayashizaki Y."/>
        </authorList>
    </citation>
    <scope>NUCLEOTIDE SEQUENCE [LARGE SCALE MRNA] (ISOFORMS 1 AND 2)</scope>
    <source>
        <strain>C57BL/6J</strain>
        <tissue>Embryo</tissue>
    </source>
</reference>
<reference key="2">
    <citation type="journal article" date="2009" name="PLoS Biol.">
        <title>Lineage-specific biology revealed by a finished genome assembly of the mouse.</title>
        <authorList>
            <person name="Church D.M."/>
            <person name="Goodstadt L."/>
            <person name="Hillier L.W."/>
            <person name="Zody M.C."/>
            <person name="Goldstein S."/>
            <person name="She X."/>
            <person name="Bult C.J."/>
            <person name="Agarwala R."/>
            <person name="Cherry J.L."/>
            <person name="DiCuccio M."/>
            <person name="Hlavina W."/>
            <person name="Kapustin Y."/>
            <person name="Meric P."/>
            <person name="Maglott D."/>
            <person name="Birtle Z."/>
            <person name="Marques A.C."/>
            <person name="Graves T."/>
            <person name="Zhou S."/>
            <person name="Teague B."/>
            <person name="Potamousis K."/>
            <person name="Churas C."/>
            <person name="Place M."/>
            <person name="Herschleb J."/>
            <person name="Runnheim R."/>
            <person name="Forrest D."/>
            <person name="Amos-Landgraf J."/>
            <person name="Schwartz D.C."/>
            <person name="Cheng Z."/>
            <person name="Lindblad-Toh K."/>
            <person name="Eichler E.E."/>
            <person name="Ponting C.P."/>
        </authorList>
    </citation>
    <scope>NUCLEOTIDE SEQUENCE [LARGE SCALE GENOMIC DNA]</scope>
    <source>
        <strain>C57BL/6J</strain>
    </source>
</reference>
<reference key="3">
    <citation type="journal article" date="2004" name="Genome Res.">
        <title>The status, quality, and expansion of the NIH full-length cDNA project: the Mammalian Gene Collection (MGC).</title>
        <authorList>
            <consortium name="The MGC Project Team"/>
        </authorList>
    </citation>
    <scope>NUCLEOTIDE SEQUENCE [LARGE SCALE MRNA] (ISOFORM 1)</scope>
    <source>
        <strain>C57BL/6J</strain>
    </source>
</reference>
<sequence>MAAANPWDPASSQTAAGLLLNHLVASGIVTKEMLDVSKKMAPCFVNFSRLQQISDIQAEIYQNNLELELLKLEKDTADLIHPSHLIEKCDVLQSMNNHLEAVLKEKHAIRQRLLRPMCQENLPLEAVYHRYVVHMLDLAVTFIEKFETHLETVKNSPHLDANLKQMSKALAKMDILVNKTEELAENILKWRELQTEISLYIPKMLTEERHLHELDIVPPLPFFPKAHTETSRAK</sequence>
<evidence type="ECO:0000250" key="1"/>
<evidence type="ECO:0000250" key="2">
    <source>
        <dbReference type="UniProtKB" id="Q9NVX0"/>
    </source>
</evidence>
<evidence type="ECO:0000255" key="3"/>
<evidence type="ECO:0000303" key="4">
    <source>
    </source>
</evidence>
<evidence type="ECO:0000305" key="5"/>
<organism>
    <name type="scientific">Mus musculus</name>
    <name type="common">Mouse</name>
    <dbReference type="NCBI Taxonomy" id="10090"/>
    <lineage>
        <taxon>Eukaryota</taxon>
        <taxon>Metazoa</taxon>
        <taxon>Chordata</taxon>
        <taxon>Craniata</taxon>
        <taxon>Vertebrata</taxon>
        <taxon>Euteleostomi</taxon>
        <taxon>Mammalia</taxon>
        <taxon>Eutheria</taxon>
        <taxon>Euarchontoglires</taxon>
        <taxon>Glires</taxon>
        <taxon>Rodentia</taxon>
        <taxon>Myomorpha</taxon>
        <taxon>Muroidea</taxon>
        <taxon>Muridae</taxon>
        <taxon>Murinae</taxon>
        <taxon>Mus</taxon>
        <taxon>Mus</taxon>
    </lineage>
</organism>